<sequence>MIVFGWAVFLASRSLGQGLLLTLEEHIAHFLGTGGAATTMGNSCICRDDSGTDDSVDTQQQQAENSAVPTADTRSQPRDPVRPPRRGRGPHEPRRKKQNVDGLVLDTLAVIRTLVDNDQEPPYSMITLHEMAETDEGWLDVVQSLIRVIPLEDPLGPAVITLLLDECPLPTKDALQKLTEILNLNGEVACQDSSHPAKHRNTSAVLGCLAEKLAGPASIGLLSPGILEYLLQCLKLQSHPTVMLFALIALEKFAQTSENKLTISESSISDRLVTLESWANDPDYLKRQVGFCAQWSLDNLFLKEGRQLTYEKVNLSSIRAMLNSNDVSEYLKISPHGLEARCDASSFESVRCTFCVDAGVWYYEVTVVTSGVMQIGWATRDSKFLNHEGYGIGDDEYSCAYDGCRQLIWYNARSKPHIHPCWKEGDTVGFLLDLNEKQMIFFLNGNQLPPEKQVFSSTVSGFFAAASFMSYQQCEFNFGAKPFKYPPSMKFSTFNDYAFLTAEEKIILPRHRRLALLKQVSIRENCCSLCCDEVADTQLKPCGHSDLCMDCALQLETCPLCRKEIVSRIRQISHIS</sequence>
<name>RSPRY_HUMAN</name>
<accession>Q96DX4</accession>
<accession>Q6UX21</accession>
<accession>Q8ND53</accession>
<protein>
    <recommendedName>
        <fullName>RING finger and SPRY domain-containing protein 1</fullName>
    </recommendedName>
</protein>
<organism>
    <name type="scientific">Homo sapiens</name>
    <name type="common">Human</name>
    <dbReference type="NCBI Taxonomy" id="9606"/>
    <lineage>
        <taxon>Eukaryota</taxon>
        <taxon>Metazoa</taxon>
        <taxon>Chordata</taxon>
        <taxon>Craniata</taxon>
        <taxon>Vertebrata</taxon>
        <taxon>Euteleostomi</taxon>
        <taxon>Mammalia</taxon>
        <taxon>Eutheria</taxon>
        <taxon>Euarchontoglires</taxon>
        <taxon>Primates</taxon>
        <taxon>Haplorrhini</taxon>
        <taxon>Catarrhini</taxon>
        <taxon>Hominidae</taxon>
        <taxon>Homo</taxon>
    </lineage>
</organism>
<gene>
    <name type="primary">RSPRY1</name>
    <name type="synonym">KIAA1972</name>
    <name type="ORF">UNQ328/PRO444</name>
</gene>
<proteinExistence type="evidence at protein level"/>
<comment type="subcellular location">
    <subcellularLocation>
        <location evidence="8">Secreted</location>
    </subcellularLocation>
</comment>
<comment type="alternative products">
    <event type="alternative splicing"/>
    <isoform>
        <id>Q96DX4-1</id>
        <name>1</name>
        <sequence type="displayed"/>
    </isoform>
    <isoform>
        <id>Q96DX4-2</id>
        <name>2</name>
        <sequence type="described" ref="VSP_023382 VSP_023383"/>
    </isoform>
</comment>
<comment type="disease" evidence="6">
    <disease id="DI-04587">
        <name>Spondyloepimetaphyseal dysplasia, Faden-Alkuraya type</name>
        <acronym>SEMDFA</acronym>
        <description>An autosomal recessive skeletal disorder characterized by spondyloepimetaphyseal dysplasia, short stature, facial dysmorphism, short fourth metatarsals, and intellectual disability.</description>
        <dbReference type="MIM" id="616723"/>
    </disease>
    <text>The disease is caused by variants affecting the gene represented in this entry.</text>
</comment>
<reference key="1">
    <citation type="journal article" date="2001" name="DNA Res.">
        <title>Prediction of the coding sequences of unidentified human genes. XXII. The complete sequences of 50 new cDNA clones which code for large proteins.</title>
        <authorList>
            <person name="Nagase T."/>
            <person name="Kikuno R."/>
            <person name="Ohara O."/>
        </authorList>
    </citation>
    <scope>NUCLEOTIDE SEQUENCE [LARGE SCALE MRNA] (ISOFORM 1)</scope>
    <source>
        <tissue>Brain</tissue>
    </source>
</reference>
<reference key="2">
    <citation type="journal article" date="2003" name="Genome Res.">
        <title>The secreted protein discovery initiative (SPDI), a large-scale effort to identify novel human secreted and transmembrane proteins: a bioinformatics assessment.</title>
        <authorList>
            <person name="Clark H.F."/>
            <person name="Gurney A.L."/>
            <person name="Abaya E."/>
            <person name="Baker K."/>
            <person name="Baldwin D.T."/>
            <person name="Brush J."/>
            <person name="Chen J."/>
            <person name="Chow B."/>
            <person name="Chui C."/>
            <person name="Crowley C."/>
            <person name="Currell B."/>
            <person name="Deuel B."/>
            <person name="Dowd P."/>
            <person name="Eaton D."/>
            <person name="Foster J.S."/>
            <person name="Grimaldi C."/>
            <person name="Gu Q."/>
            <person name="Hass P.E."/>
            <person name="Heldens S."/>
            <person name="Huang A."/>
            <person name="Kim H.S."/>
            <person name="Klimowski L."/>
            <person name="Jin Y."/>
            <person name="Johnson S."/>
            <person name="Lee J."/>
            <person name="Lewis L."/>
            <person name="Liao D."/>
            <person name="Mark M.R."/>
            <person name="Robbie E."/>
            <person name="Sanchez C."/>
            <person name="Schoenfeld J."/>
            <person name="Seshagiri S."/>
            <person name="Simmons L."/>
            <person name="Singh J."/>
            <person name="Smith V."/>
            <person name="Stinson J."/>
            <person name="Vagts A."/>
            <person name="Vandlen R.L."/>
            <person name="Watanabe C."/>
            <person name="Wieand D."/>
            <person name="Woods K."/>
            <person name="Xie M.-H."/>
            <person name="Yansura D.G."/>
            <person name="Yi S."/>
            <person name="Yu G."/>
            <person name="Yuan J."/>
            <person name="Zhang M."/>
            <person name="Zhang Z."/>
            <person name="Goddard A.D."/>
            <person name="Wood W.I."/>
            <person name="Godowski P.J."/>
            <person name="Gray A.M."/>
        </authorList>
    </citation>
    <scope>NUCLEOTIDE SEQUENCE [LARGE SCALE MRNA] (ISOFORM 2)</scope>
</reference>
<reference key="3">
    <citation type="journal article" date="2004" name="Nat. Genet.">
        <title>Complete sequencing and characterization of 21,243 full-length human cDNAs.</title>
        <authorList>
            <person name="Ota T."/>
            <person name="Suzuki Y."/>
            <person name="Nishikawa T."/>
            <person name="Otsuki T."/>
            <person name="Sugiyama T."/>
            <person name="Irie R."/>
            <person name="Wakamatsu A."/>
            <person name="Hayashi K."/>
            <person name="Sato H."/>
            <person name="Nagai K."/>
            <person name="Kimura K."/>
            <person name="Makita H."/>
            <person name="Sekine M."/>
            <person name="Obayashi M."/>
            <person name="Nishi T."/>
            <person name="Shibahara T."/>
            <person name="Tanaka T."/>
            <person name="Ishii S."/>
            <person name="Yamamoto J."/>
            <person name="Saito K."/>
            <person name="Kawai Y."/>
            <person name="Isono Y."/>
            <person name="Nakamura Y."/>
            <person name="Nagahari K."/>
            <person name="Murakami K."/>
            <person name="Yasuda T."/>
            <person name="Iwayanagi T."/>
            <person name="Wagatsuma M."/>
            <person name="Shiratori A."/>
            <person name="Sudo H."/>
            <person name="Hosoiri T."/>
            <person name="Kaku Y."/>
            <person name="Kodaira H."/>
            <person name="Kondo H."/>
            <person name="Sugawara M."/>
            <person name="Takahashi M."/>
            <person name="Kanda K."/>
            <person name="Yokoi T."/>
            <person name="Furuya T."/>
            <person name="Kikkawa E."/>
            <person name="Omura Y."/>
            <person name="Abe K."/>
            <person name="Kamihara K."/>
            <person name="Katsuta N."/>
            <person name="Sato K."/>
            <person name="Tanikawa M."/>
            <person name="Yamazaki M."/>
            <person name="Ninomiya K."/>
            <person name="Ishibashi T."/>
            <person name="Yamashita H."/>
            <person name="Murakawa K."/>
            <person name="Fujimori K."/>
            <person name="Tanai H."/>
            <person name="Kimata M."/>
            <person name="Watanabe M."/>
            <person name="Hiraoka S."/>
            <person name="Chiba Y."/>
            <person name="Ishida S."/>
            <person name="Ono Y."/>
            <person name="Takiguchi S."/>
            <person name="Watanabe S."/>
            <person name="Yosida M."/>
            <person name="Hotuta T."/>
            <person name="Kusano J."/>
            <person name="Kanehori K."/>
            <person name="Takahashi-Fujii A."/>
            <person name="Hara H."/>
            <person name="Tanase T.-O."/>
            <person name="Nomura Y."/>
            <person name="Togiya S."/>
            <person name="Komai F."/>
            <person name="Hara R."/>
            <person name="Takeuchi K."/>
            <person name="Arita M."/>
            <person name="Imose N."/>
            <person name="Musashino K."/>
            <person name="Yuuki H."/>
            <person name="Oshima A."/>
            <person name="Sasaki N."/>
            <person name="Aotsuka S."/>
            <person name="Yoshikawa Y."/>
            <person name="Matsunawa H."/>
            <person name="Ichihara T."/>
            <person name="Shiohata N."/>
            <person name="Sano S."/>
            <person name="Moriya S."/>
            <person name="Momiyama H."/>
            <person name="Satoh N."/>
            <person name="Takami S."/>
            <person name="Terashima Y."/>
            <person name="Suzuki O."/>
            <person name="Nakagawa S."/>
            <person name="Senoh A."/>
            <person name="Mizoguchi H."/>
            <person name="Goto Y."/>
            <person name="Shimizu F."/>
            <person name="Wakebe H."/>
            <person name="Hishigaki H."/>
            <person name="Watanabe T."/>
            <person name="Sugiyama A."/>
            <person name="Takemoto M."/>
            <person name="Kawakami B."/>
            <person name="Yamazaki M."/>
            <person name="Watanabe K."/>
            <person name="Kumagai A."/>
            <person name="Itakura S."/>
            <person name="Fukuzumi Y."/>
            <person name="Fujimori Y."/>
            <person name="Komiyama M."/>
            <person name="Tashiro H."/>
            <person name="Tanigami A."/>
            <person name="Fujiwara T."/>
            <person name="Ono T."/>
            <person name="Yamada K."/>
            <person name="Fujii Y."/>
            <person name="Ozaki K."/>
            <person name="Hirao M."/>
            <person name="Ohmori Y."/>
            <person name="Kawabata A."/>
            <person name="Hikiji T."/>
            <person name="Kobatake N."/>
            <person name="Inagaki H."/>
            <person name="Ikema Y."/>
            <person name="Okamoto S."/>
            <person name="Okitani R."/>
            <person name="Kawakami T."/>
            <person name="Noguchi S."/>
            <person name="Itoh T."/>
            <person name="Shigeta K."/>
            <person name="Senba T."/>
            <person name="Matsumura K."/>
            <person name="Nakajima Y."/>
            <person name="Mizuno T."/>
            <person name="Morinaga M."/>
            <person name="Sasaki M."/>
            <person name="Togashi T."/>
            <person name="Oyama M."/>
            <person name="Hata H."/>
            <person name="Watanabe M."/>
            <person name="Komatsu T."/>
            <person name="Mizushima-Sugano J."/>
            <person name="Satoh T."/>
            <person name="Shirai Y."/>
            <person name="Takahashi Y."/>
            <person name="Nakagawa K."/>
            <person name="Okumura K."/>
            <person name="Nagase T."/>
            <person name="Nomura N."/>
            <person name="Kikuchi H."/>
            <person name="Masuho Y."/>
            <person name="Yamashita R."/>
            <person name="Nakai K."/>
            <person name="Yada T."/>
            <person name="Nakamura Y."/>
            <person name="Ohara O."/>
            <person name="Isogai T."/>
            <person name="Sugano S."/>
        </authorList>
    </citation>
    <scope>NUCLEOTIDE SEQUENCE [LARGE SCALE MRNA] (ISOFORM 1)</scope>
</reference>
<reference key="4">
    <citation type="journal article" date="2004" name="Genome Res.">
        <title>The status, quality, and expansion of the NIH full-length cDNA project: the Mammalian Gene Collection (MGC).</title>
        <authorList>
            <consortium name="The MGC Project Team"/>
        </authorList>
    </citation>
    <scope>NUCLEOTIDE SEQUENCE [LARGE SCALE MRNA] (ISOFORM 1)</scope>
    <source>
        <tissue>Lymph</tissue>
    </source>
</reference>
<reference key="5">
    <citation type="journal article" date="2007" name="BMC Genomics">
        <title>The full-ORF clone resource of the German cDNA consortium.</title>
        <authorList>
            <person name="Bechtel S."/>
            <person name="Rosenfelder H."/>
            <person name="Duda A."/>
            <person name="Schmidt C.P."/>
            <person name="Ernst U."/>
            <person name="Wellenreuther R."/>
            <person name="Mehrle A."/>
            <person name="Schuster C."/>
            <person name="Bahr A."/>
            <person name="Bloecker H."/>
            <person name="Heubner D."/>
            <person name="Hoerlein A."/>
            <person name="Michel G."/>
            <person name="Wedler H."/>
            <person name="Koehrer K."/>
            <person name="Ottenwaelder B."/>
            <person name="Poustka A."/>
            <person name="Wiemann S."/>
            <person name="Schupp I."/>
        </authorList>
    </citation>
    <scope>NUCLEOTIDE SEQUENCE [LARGE SCALE MRNA] OF 492-576 (ISOFORM 1)</scope>
    <source>
        <tissue>Brain</tissue>
    </source>
</reference>
<reference key="6">
    <citation type="journal article" date="2014" name="J. Proteomics">
        <title>An enzyme assisted RP-RPLC approach for in-depth analysis of human liver phosphoproteome.</title>
        <authorList>
            <person name="Bian Y."/>
            <person name="Song C."/>
            <person name="Cheng K."/>
            <person name="Dong M."/>
            <person name="Wang F."/>
            <person name="Huang J."/>
            <person name="Sun D."/>
            <person name="Wang L."/>
            <person name="Ye M."/>
            <person name="Zou H."/>
        </authorList>
    </citation>
    <scope>IDENTIFICATION BY MASS SPECTROMETRY [LARGE SCALE ANALYSIS]</scope>
    <source>
        <tissue>Liver</tissue>
    </source>
</reference>
<reference key="7">
    <citation type="journal article" date="2015" name="Am. J. Hum. Genet.">
        <title>Identification of a recognizable progressive skeletal dysplasia caused by RSPRY1 mutations.</title>
        <authorList>
            <consortium name="Care4Rare Canada Consortium"/>
            <person name="Faden M."/>
            <person name="Al-Zahrani F."/>
            <person name="Mendoza-Londono R."/>
            <person name="Dupuis L."/>
            <person name="Hartley T."/>
            <person name="Kannu P."/>
            <person name="Raiman J.A."/>
            <person name="Howard A."/>
            <person name="Qin W."/>
            <person name="Tetreault M."/>
            <person name="Xi J.Q."/>
            <person name="Al-Thamer I."/>
            <person name="Maas R.L."/>
            <person name="Boycott K."/>
            <person name="Alkuraya F.S."/>
        </authorList>
    </citation>
    <scope>INVOLVEMENT IN SEMDFA</scope>
    <scope>VARIANT SEMDFA CYS-41</scope>
</reference>
<dbReference type="EMBL" id="AB075852">
    <property type="protein sequence ID" value="BAB85558.1"/>
    <property type="molecule type" value="mRNA"/>
</dbReference>
<dbReference type="EMBL" id="AY358548">
    <property type="protein sequence ID" value="AAQ88912.1"/>
    <property type="molecule type" value="mRNA"/>
</dbReference>
<dbReference type="EMBL" id="AK172845">
    <property type="protein sequence ID" value="BAD18809.1"/>
    <property type="molecule type" value="mRNA"/>
</dbReference>
<dbReference type="EMBL" id="BC013173">
    <property type="protein sequence ID" value="AAH13173.1"/>
    <property type="molecule type" value="mRNA"/>
</dbReference>
<dbReference type="EMBL" id="AL834402">
    <property type="protein sequence ID" value="CAD39064.1"/>
    <property type="molecule type" value="mRNA"/>
</dbReference>
<dbReference type="CCDS" id="CCDS10775.1">
    <molecule id="Q96DX4-1"/>
</dbReference>
<dbReference type="RefSeq" id="NP_001292092.1">
    <molecule id="Q96DX4-1"/>
    <property type="nucleotide sequence ID" value="NM_001305163.2"/>
</dbReference>
<dbReference type="RefSeq" id="NP_001292093.1">
    <molecule id="Q96DX4-1"/>
    <property type="nucleotide sequence ID" value="NM_001305164.2"/>
</dbReference>
<dbReference type="RefSeq" id="NP_001292111.1">
    <molecule id="Q96DX4-2"/>
    <property type="nucleotide sequence ID" value="NM_001305182.2"/>
</dbReference>
<dbReference type="RefSeq" id="NP_588609.1">
    <molecule id="Q96DX4-1"/>
    <property type="nucleotide sequence ID" value="NM_133368.3"/>
</dbReference>
<dbReference type="RefSeq" id="XP_005256277.1">
    <molecule id="Q96DX4-1"/>
    <property type="nucleotide sequence ID" value="XM_005256220.3"/>
</dbReference>
<dbReference type="RefSeq" id="XP_024306252.1">
    <molecule id="Q96DX4-1"/>
    <property type="nucleotide sequence ID" value="XM_024450484.2"/>
</dbReference>
<dbReference type="RefSeq" id="XP_047290811.1">
    <molecule id="Q96DX4-1"/>
    <property type="nucleotide sequence ID" value="XM_047434855.1"/>
</dbReference>
<dbReference type="RefSeq" id="XP_047290812.1">
    <molecule id="Q96DX4-1"/>
    <property type="nucleotide sequence ID" value="XM_047434856.1"/>
</dbReference>
<dbReference type="RefSeq" id="XP_054170273.1">
    <molecule id="Q96DX4-1"/>
    <property type="nucleotide sequence ID" value="XM_054314298.1"/>
</dbReference>
<dbReference type="RefSeq" id="XP_054170274.1">
    <molecule id="Q96DX4-1"/>
    <property type="nucleotide sequence ID" value="XM_054314299.1"/>
</dbReference>
<dbReference type="RefSeq" id="XP_054170275.1">
    <molecule id="Q96DX4-1"/>
    <property type="nucleotide sequence ID" value="XM_054314300.1"/>
</dbReference>
<dbReference type="RefSeq" id="XP_054170276.1">
    <molecule id="Q96DX4-1"/>
    <property type="nucleotide sequence ID" value="XM_054314301.1"/>
</dbReference>
<dbReference type="SMR" id="Q96DX4"/>
<dbReference type="BioGRID" id="124650">
    <property type="interactions" value="79"/>
</dbReference>
<dbReference type="FunCoup" id="Q96DX4">
    <property type="interactions" value="1550"/>
</dbReference>
<dbReference type="IntAct" id="Q96DX4">
    <property type="interactions" value="62"/>
</dbReference>
<dbReference type="STRING" id="9606.ENSP00000443176"/>
<dbReference type="GlyCosmos" id="Q96DX4">
    <property type="glycosylation" value="2 sites, 2 glycans"/>
</dbReference>
<dbReference type="GlyGen" id="Q96DX4">
    <property type="glycosylation" value="2 sites, 2 O-linked glycans (1 site)"/>
</dbReference>
<dbReference type="iPTMnet" id="Q96DX4"/>
<dbReference type="PhosphoSitePlus" id="Q96DX4"/>
<dbReference type="SwissPalm" id="Q96DX4"/>
<dbReference type="BioMuta" id="RSPRY1"/>
<dbReference type="DMDM" id="74731506"/>
<dbReference type="jPOST" id="Q96DX4"/>
<dbReference type="MassIVE" id="Q96DX4"/>
<dbReference type="PaxDb" id="9606-ENSP00000443176"/>
<dbReference type="PeptideAtlas" id="Q96DX4"/>
<dbReference type="ProteomicsDB" id="76332">
    <molecule id="Q96DX4-1"/>
</dbReference>
<dbReference type="ProteomicsDB" id="76333">
    <molecule id="Q96DX4-2"/>
</dbReference>
<dbReference type="Pumba" id="Q96DX4"/>
<dbReference type="Antibodypedia" id="28826">
    <property type="antibodies" value="82 antibodies from 15 providers"/>
</dbReference>
<dbReference type="DNASU" id="89970"/>
<dbReference type="Ensembl" id="ENST00000394420.9">
    <molecule id="Q96DX4-1"/>
    <property type="protein sequence ID" value="ENSP00000377942.4"/>
    <property type="gene ID" value="ENSG00000159579.14"/>
</dbReference>
<dbReference type="Ensembl" id="ENST00000537866.5">
    <molecule id="Q96DX4-1"/>
    <property type="protein sequence ID" value="ENSP00000443176.1"/>
    <property type="gene ID" value="ENSG00000159579.14"/>
</dbReference>
<dbReference type="GeneID" id="89970"/>
<dbReference type="KEGG" id="hsa:89970"/>
<dbReference type="MANE-Select" id="ENST00000394420.9">
    <property type="protein sequence ID" value="ENSP00000377942.4"/>
    <property type="RefSeq nucleotide sequence ID" value="NM_133368.3"/>
    <property type="RefSeq protein sequence ID" value="NP_588609.1"/>
</dbReference>
<dbReference type="UCSC" id="uc002elb.4">
    <molecule id="Q96DX4-1"/>
    <property type="organism name" value="human"/>
</dbReference>
<dbReference type="AGR" id="HGNC:29420"/>
<dbReference type="CTD" id="89970"/>
<dbReference type="DisGeNET" id="89970"/>
<dbReference type="GeneCards" id="RSPRY1"/>
<dbReference type="HGNC" id="HGNC:29420">
    <property type="gene designation" value="RSPRY1"/>
</dbReference>
<dbReference type="HPA" id="ENSG00000159579">
    <property type="expression patterns" value="Low tissue specificity"/>
</dbReference>
<dbReference type="MalaCards" id="RSPRY1"/>
<dbReference type="MIM" id="616585">
    <property type="type" value="gene"/>
</dbReference>
<dbReference type="MIM" id="616723">
    <property type="type" value="phenotype"/>
</dbReference>
<dbReference type="neXtProt" id="NX_Q96DX4"/>
<dbReference type="OpenTargets" id="ENSG00000159579"/>
<dbReference type="Orphanet" id="457395">
    <property type="disease" value="Progressive spondyloepimetaphyseal dysplasia-short stature-short fourth metatarsals-intellectual disability syndrome"/>
</dbReference>
<dbReference type="PharmGKB" id="PA143485602"/>
<dbReference type="VEuPathDB" id="HostDB:ENSG00000159579"/>
<dbReference type="eggNOG" id="KOG2242">
    <property type="taxonomic scope" value="Eukaryota"/>
</dbReference>
<dbReference type="GeneTree" id="ENSGT00940000157894"/>
<dbReference type="HOGENOM" id="CLU_026400_0_0_1"/>
<dbReference type="InParanoid" id="Q96DX4"/>
<dbReference type="OMA" id="IAFDGCR"/>
<dbReference type="OrthoDB" id="10017393at2759"/>
<dbReference type="PAN-GO" id="Q96DX4">
    <property type="GO annotations" value="3 GO annotations based on evolutionary models"/>
</dbReference>
<dbReference type="PhylomeDB" id="Q96DX4"/>
<dbReference type="TreeFam" id="TF313546"/>
<dbReference type="PathwayCommons" id="Q96DX4"/>
<dbReference type="SignaLink" id="Q96DX4"/>
<dbReference type="SIGNOR" id="Q96DX4"/>
<dbReference type="BioGRID-ORCS" id="89970">
    <property type="hits" value="16 hits in 1108 CRISPR screens"/>
</dbReference>
<dbReference type="ChiTaRS" id="RSPRY1">
    <property type="organism name" value="human"/>
</dbReference>
<dbReference type="GenomeRNAi" id="89970"/>
<dbReference type="Pharos" id="Q96DX4">
    <property type="development level" value="Tdark"/>
</dbReference>
<dbReference type="PRO" id="PR:Q96DX4"/>
<dbReference type="Proteomes" id="UP000005640">
    <property type="component" value="Chromosome 16"/>
</dbReference>
<dbReference type="RNAct" id="Q96DX4">
    <property type="molecule type" value="protein"/>
</dbReference>
<dbReference type="Bgee" id="ENSG00000159579">
    <property type="expression patterns" value="Expressed in kidney epithelium and 198 other cell types or tissues"/>
</dbReference>
<dbReference type="ExpressionAtlas" id="Q96DX4">
    <property type="expression patterns" value="baseline and differential"/>
</dbReference>
<dbReference type="GO" id="GO:0005737">
    <property type="term" value="C:cytoplasm"/>
    <property type="evidence" value="ECO:0000318"/>
    <property type="project" value="GO_Central"/>
</dbReference>
<dbReference type="GO" id="GO:0005576">
    <property type="term" value="C:extracellular region"/>
    <property type="evidence" value="ECO:0007669"/>
    <property type="project" value="UniProtKB-SubCell"/>
</dbReference>
<dbReference type="GO" id="GO:0004842">
    <property type="term" value="F:ubiquitin-protein transferase activity"/>
    <property type="evidence" value="ECO:0000318"/>
    <property type="project" value="GO_Central"/>
</dbReference>
<dbReference type="GO" id="GO:0008270">
    <property type="term" value="F:zinc ion binding"/>
    <property type="evidence" value="ECO:0007669"/>
    <property type="project" value="UniProtKB-KW"/>
</dbReference>
<dbReference type="GO" id="GO:0051603">
    <property type="term" value="P:proteolysis involved in protein catabolic process"/>
    <property type="evidence" value="ECO:0000318"/>
    <property type="project" value="GO_Central"/>
</dbReference>
<dbReference type="CDD" id="cd16566">
    <property type="entry name" value="RING-HC_RSPRY1"/>
    <property type="match status" value="1"/>
</dbReference>
<dbReference type="CDD" id="cd12883">
    <property type="entry name" value="SPRY_RING"/>
    <property type="match status" value="1"/>
</dbReference>
<dbReference type="Gene3D" id="2.60.120.920">
    <property type="match status" value="1"/>
</dbReference>
<dbReference type="Gene3D" id="3.30.40.10">
    <property type="entry name" value="Zinc/RING finger domain, C3HC4 (zinc finger)"/>
    <property type="match status" value="1"/>
</dbReference>
<dbReference type="InterPro" id="IPR016024">
    <property type="entry name" value="ARM-type_fold"/>
</dbReference>
<dbReference type="InterPro" id="IPR001870">
    <property type="entry name" value="B30.2/SPRY"/>
</dbReference>
<dbReference type="InterPro" id="IPR043136">
    <property type="entry name" value="B30.2/SPRY_sf"/>
</dbReference>
<dbReference type="InterPro" id="IPR013320">
    <property type="entry name" value="ConA-like_dom_sf"/>
</dbReference>
<dbReference type="InterPro" id="IPR045129">
    <property type="entry name" value="RNF123/RSPRY1-like"/>
</dbReference>
<dbReference type="InterPro" id="IPR003877">
    <property type="entry name" value="SPRY_dom"/>
</dbReference>
<dbReference type="InterPro" id="IPR035774">
    <property type="entry name" value="SPRY_RSPRY1"/>
</dbReference>
<dbReference type="InterPro" id="IPR001841">
    <property type="entry name" value="Znf_RING"/>
</dbReference>
<dbReference type="InterPro" id="IPR013083">
    <property type="entry name" value="Znf_RING/FYVE/PHD"/>
</dbReference>
<dbReference type="PANTHER" id="PTHR13363:SF6">
    <property type="entry name" value="RING FINGER AND SPRY DOMAIN-CONTAINING PROTEIN 1"/>
    <property type="match status" value="1"/>
</dbReference>
<dbReference type="PANTHER" id="PTHR13363">
    <property type="entry name" value="RING FINGER AND SRY DOMAIN-CONTAINING"/>
    <property type="match status" value="1"/>
</dbReference>
<dbReference type="Pfam" id="PF00622">
    <property type="entry name" value="SPRY"/>
    <property type="match status" value="1"/>
</dbReference>
<dbReference type="Pfam" id="PF13920">
    <property type="entry name" value="zf-C3HC4_3"/>
    <property type="match status" value="1"/>
</dbReference>
<dbReference type="SMART" id="SM00184">
    <property type="entry name" value="RING"/>
    <property type="match status" value="1"/>
</dbReference>
<dbReference type="SMART" id="SM00449">
    <property type="entry name" value="SPRY"/>
    <property type="match status" value="1"/>
</dbReference>
<dbReference type="SUPFAM" id="SSF48371">
    <property type="entry name" value="ARM repeat"/>
    <property type="match status" value="1"/>
</dbReference>
<dbReference type="SUPFAM" id="SSF49899">
    <property type="entry name" value="Concanavalin A-like lectins/glucanases"/>
    <property type="match status" value="1"/>
</dbReference>
<dbReference type="SUPFAM" id="SSF57850">
    <property type="entry name" value="RING/U-box"/>
    <property type="match status" value="1"/>
</dbReference>
<dbReference type="PROSITE" id="PS50188">
    <property type="entry name" value="B302_SPRY"/>
    <property type="match status" value="1"/>
</dbReference>
<dbReference type="PROSITE" id="PS50089">
    <property type="entry name" value="ZF_RING_2"/>
    <property type="match status" value="1"/>
</dbReference>
<evidence type="ECO:0000250" key="1">
    <source>
        <dbReference type="UniProtKB" id="Q8BVR6"/>
    </source>
</evidence>
<evidence type="ECO:0000255" key="2"/>
<evidence type="ECO:0000255" key="3">
    <source>
        <dbReference type="PROSITE-ProRule" id="PRU00175"/>
    </source>
</evidence>
<evidence type="ECO:0000255" key="4">
    <source>
        <dbReference type="PROSITE-ProRule" id="PRU00548"/>
    </source>
</evidence>
<evidence type="ECO:0000256" key="5">
    <source>
        <dbReference type="SAM" id="MobiDB-lite"/>
    </source>
</evidence>
<evidence type="ECO:0000269" key="6">
    <source>
    </source>
</evidence>
<evidence type="ECO:0000303" key="7">
    <source>
    </source>
</evidence>
<evidence type="ECO:0000305" key="8"/>
<feature type="signal peptide" evidence="2">
    <location>
        <begin position="1"/>
        <end position="16"/>
    </location>
</feature>
<feature type="chain" id="PRO_0000278786" description="RING finger and SPRY domain-containing protein 1">
    <location>
        <begin position="17"/>
        <end position="576"/>
    </location>
</feature>
<feature type="domain" description="B30.2/SPRY" evidence="4">
    <location>
        <begin position="300"/>
        <end position="483"/>
    </location>
</feature>
<feature type="zinc finger region" description="RING-type" evidence="3">
    <location>
        <begin position="527"/>
        <end position="562"/>
    </location>
</feature>
<feature type="region of interest" description="Disordered" evidence="5">
    <location>
        <begin position="50"/>
        <end position="99"/>
    </location>
</feature>
<feature type="compositionally biased region" description="Polar residues" evidence="5">
    <location>
        <begin position="57"/>
        <end position="68"/>
    </location>
</feature>
<feature type="compositionally biased region" description="Basic residues" evidence="5">
    <location>
        <begin position="83"/>
        <end position="97"/>
    </location>
</feature>
<feature type="modified residue" description="Phosphoserine" evidence="1">
    <location>
        <position position="50"/>
    </location>
</feature>
<feature type="glycosylation site" description="N-linked (GlcNAc...) asparagine" evidence="2">
    <location>
        <position position="314"/>
    </location>
</feature>
<feature type="splice variant" id="VSP_023382" description="In isoform 2." evidence="7">
    <original>N</original>
    <variation>K</variation>
    <location>
        <position position="117"/>
    </location>
</feature>
<feature type="splice variant" id="VSP_023383" description="In isoform 2." evidence="7">
    <location>
        <begin position="118"/>
        <end position="576"/>
    </location>
</feature>
<feature type="sequence variant" id="VAR_075873" description="In SEMDFA; dbSNP:rs864309652." evidence="6">
    <original>G</original>
    <variation>C</variation>
    <location>
        <position position="41"/>
    </location>
</feature>
<keyword id="KW-0025">Alternative splicing</keyword>
<keyword id="KW-0225">Disease variant</keyword>
<keyword id="KW-0242">Dwarfism</keyword>
<keyword id="KW-0325">Glycoprotein</keyword>
<keyword id="KW-0991">Intellectual disability</keyword>
<keyword id="KW-0479">Metal-binding</keyword>
<keyword id="KW-0597">Phosphoprotein</keyword>
<keyword id="KW-1267">Proteomics identification</keyword>
<keyword id="KW-1185">Reference proteome</keyword>
<keyword id="KW-0964">Secreted</keyword>
<keyword id="KW-0732">Signal</keyword>
<keyword id="KW-0862">Zinc</keyword>
<keyword id="KW-0863">Zinc-finger</keyword>